<dbReference type="EC" id="2.4.2.4" evidence="1"/>
<dbReference type="EMBL" id="CP000774">
    <property type="protein sequence ID" value="ABS65061.1"/>
    <property type="molecule type" value="Genomic_DNA"/>
</dbReference>
<dbReference type="RefSeq" id="WP_012112373.1">
    <property type="nucleotide sequence ID" value="NC_009719.1"/>
</dbReference>
<dbReference type="SMR" id="A7HYS8"/>
<dbReference type="STRING" id="402881.Plav_3461"/>
<dbReference type="KEGG" id="pla:Plav_3461"/>
<dbReference type="eggNOG" id="COG0213">
    <property type="taxonomic scope" value="Bacteria"/>
</dbReference>
<dbReference type="HOGENOM" id="CLU_025040_6_0_5"/>
<dbReference type="OrthoDB" id="341217at2"/>
<dbReference type="Proteomes" id="UP000006377">
    <property type="component" value="Chromosome"/>
</dbReference>
<dbReference type="GO" id="GO:0005829">
    <property type="term" value="C:cytosol"/>
    <property type="evidence" value="ECO:0007669"/>
    <property type="project" value="TreeGrafter"/>
</dbReference>
<dbReference type="GO" id="GO:0004645">
    <property type="term" value="F:1,4-alpha-oligoglucan phosphorylase activity"/>
    <property type="evidence" value="ECO:0007669"/>
    <property type="project" value="InterPro"/>
</dbReference>
<dbReference type="GO" id="GO:0009032">
    <property type="term" value="F:thymidine phosphorylase activity"/>
    <property type="evidence" value="ECO:0007669"/>
    <property type="project" value="UniProtKB-UniRule"/>
</dbReference>
<dbReference type="GO" id="GO:0006206">
    <property type="term" value="P:pyrimidine nucleobase metabolic process"/>
    <property type="evidence" value="ECO:0007669"/>
    <property type="project" value="InterPro"/>
</dbReference>
<dbReference type="GO" id="GO:0006213">
    <property type="term" value="P:pyrimidine nucleoside metabolic process"/>
    <property type="evidence" value="ECO:0007669"/>
    <property type="project" value="InterPro"/>
</dbReference>
<dbReference type="Gene3D" id="1.20.970.50">
    <property type="match status" value="1"/>
</dbReference>
<dbReference type="Gene3D" id="3.40.1030.10">
    <property type="entry name" value="Nucleoside phosphorylase/phosphoribosyltransferase catalytic domain"/>
    <property type="match status" value="1"/>
</dbReference>
<dbReference type="Gene3D" id="3.90.1170.30">
    <property type="entry name" value="Pyrimidine nucleoside phosphorylase-like, C-terminal domain"/>
    <property type="match status" value="1"/>
</dbReference>
<dbReference type="HAMAP" id="MF_00703">
    <property type="entry name" value="Thymid_phosp_2"/>
    <property type="match status" value="1"/>
</dbReference>
<dbReference type="InterPro" id="IPR000312">
    <property type="entry name" value="Glycosyl_Trfase_fam3"/>
</dbReference>
<dbReference type="InterPro" id="IPR017459">
    <property type="entry name" value="Glycosyl_Trfase_fam3_N_dom"/>
</dbReference>
<dbReference type="InterPro" id="IPR036320">
    <property type="entry name" value="Glycosyl_Trfase_fam3_N_dom_sf"/>
</dbReference>
<dbReference type="InterPro" id="IPR035902">
    <property type="entry name" value="Nuc_phospho_transferase"/>
</dbReference>
<dbReference type="InterPro" id="IPR036566">
    <property type="entry name" value="PYNP-like_C_sf"/>
</dbReference>
<dbReference type="InterPro" id="IPR013102">
    <property type="entry name" value="PYNP_C"/>
</dbReference>
<dbReference type="InterPro" id="IPR017872">
    <property type="entry name" value="Pyrmidine_PPase_CS"/>
</dbReference>
<dbReference type="InterPro" id="IPR028579">
    <property type="entry name" value="Thym_Pase_Put"/>
</dbReference>
<dbReference type="InterPro" id="IPR013466">
    <property type="entry name" value="Thymidine/AMP_Pase"/>
</dbReference>
<dbReference type="InterPro" id="IPR000053">
    <property type="entry name" value="Thymidine/pyrmidine_PPase"/>
</dbReference>
<dbReference type="NCBIfam" id="TIGR02645">
    <property type="entry name" value="ARCH_P_rylase"/>
    <property type="match status" value="1"/>
</dbReference>
<dbReference type="NCBIfam" id="NF003338">
    <property type="entry name" value="PRK04350.1"/>
    <property type="match status" value="1"/>
</dbReference>
<dbReference type="PANTHER" id="PTHR10515">
    <property type="entry name" value="THYMIDINE PHOSPHORYLASE"/>
    <property type="match status" value="1"/>
</dbReference>
<dbReference type="PANTHER" id="PTHR10515:SF0">
    <property type="entry name" value="THYMIDINE PHOSPHORYLASE"/>
    <property type="match status" value="1"/>
</dbReference>
<dbReference type="Pfam" id="PF02885">
    <property type="entry name" value="Glycos_trans_3N"/>
    <property type="match status" value="1"/>
</dbReference>
<dbReference type="Pfam" id="PF00591">
    <property type="entry name" value="Glycos_transf_3"/>
    <property type="match status" value="1"/>
</dbReference>
<dbReference type="Pfam" id="PF07831">
    <property type="entry name" value="PYNP_C"/>
    <property type="match status" value="1"/>
</dbReference>
<dbReference type="SMART" id="SM00941">
    <property type="entry name" value="PYNP_C"/>
    <property type="match status" value="1"/>
</dbReference>
<dbReference type="SUPFAM" id="SSF52418">
    <property type="entry name" value="Nucleoside phosphorylase/phosphoribosyltransferase catalytic domain"/>
    <property type="match status" value="1"/>
</dbReference>
<dbReference type="SUPFAM" id="SSF47648">
    <property type="entry name" value="Nucleoside phosphorylase/phosphoribosyltransferase N-terminal domain"/>
    <property type="match status" value="1"/>
</dbReference>
<dbReference type="SUPFAM" id="SSF54680">
    <property type="entry name" value="Pyrimidine nucleoside phosphorylase C-terminal domain"/>
    <property type="match status" value="1"/>
</dbReference>
<dbReference type="PROSITE" id="PS00647">
    <property type="entry name" value="THYMID_PHOSPHORYLASE"/>
    <property type="match status" value="1"/>
</dbReference>
<proteinExistence type="inferred from homology"/>
<protein>
    <recommendedName>
        <fullName evidence="1">Putative thymidine phosphorylase</fullName>
        <ecNumber evidence="1">2.4.2.4</ecNumber>
    </recommendedName>
    <alternativeName>
        <fullName evidence="1">TdRPase</fullName>
    </alternativeName>
</protein>
<reference key="1">
    <citation type="journal article" date="2011" name="Stand. Genomic Sci.">
        <title>Complete genome sequence of Parvibaculum lavamentivorans type strain (DS-1(T)).</title>
        <authorList>
            <person name="Schleheck D."/>
            <person name="Weiss M."/>
            <person name="Pitluck S."/>
            <person name="Bruce D."/>
            <person name="Land M.L."/>
            <person name="Han S."/>
            <person name="Saunders E."/>
            <person name="Tapia R."/>
            <person name="Detter C."/>
            <person name="Brettin T."/>
            <person name="Han J."/>
            <person name="Woyke T."/>
            <person name="Goodwin L."/>
            <person name="Pennacchio L."/>
            <person name="Nolan M."/>
            <person name="Cook A.M."/>
            <person name="Kjelleberg S."/>
            <person name="Thomas T."/>
        </authorList>
    </citation>
    <scope>NUCLEOTIDE SEQUENCE [LARGE SCALE GENOMIC DNA]</scope>
    <source>
        <strain>DS-1 / DSM 13023 / NCIMB 13966</strain>
    </source>
</reference>
<evidence type="ECO:0000255" key="1">
    <source>
        <dbReference type="HAMAP-Rule" id="MF_00703"/>
    </source>
</evidence>
<gene>
    <name type="ordered locus">Plav_3461</name>
</gene>
<organism>
    <name type="scientific">Parvibaculum lavamentivorans (strain DS-1 / DSM 13023 / NCIMB 13966)</name>
    <dbReference type="NCBI Taxonomy" id="402881"/>
    <lineage>
        <taxon>Bacteria</taxon>
        <taxon>Pseudomonadati</taxon>
        <taxon>Pseudomonadota</taxon>
        <taxon>Alphaproteobacteria</taxon>
        <taxon>Hyphomicrobiales</taxon>
        <taxon>Parvibaculaceae</taxon>
        <taxon>Parvibaculum</taxon>
    </lineage>
</organism>
<sequence length="505" mass="54109">MSARITPQTPALQALRMRLHAQHQPVVLMRTDCHVCRAEGLAPRSQVLIIAGDRTVQALLYQIDSDLLKTGQIALSEAAWDALDIHEGDLVQVRHPPLLESLSAVRARIHGHRLQTTELQAIVRDVVDGRYTDVALSAFLTATAVLPLDMQETIHLTRAMVDVGDHLQWQAPIVVDKHCVGGLPGNRTTPLVVAIAAANGLVMPKTSSRAITSPAGTADTMETLAPVDLDLDTLRKVVEKEGGCVAWGGAMHLSPADDIFVRIERELDIDTQGQLIASVLSKKIAAGATHIVIDIPVGPTAKVRSRETAEHLAHHLSEVAASFGLVLRCLFTDGNQPVGRGIGPALEARDVLAVLRNEADAPQDLCDRVALVAGAVLELGGVAKEGDGIRLAHETISSGRAWEKFQRICAAQGGFREPPQALYVEPLLATTSGRAVHIDNRKLSRLAKLAGAPESPAAGIQLQVRLGDEVTRGQSLMFLHAQTSGEMAYALAYVHDIGDIVKIEP</sequence>
<name>TYPH_PARL1</name>
<feature type="chain" id="PRO_0000314705" description="Putative thymidine phosphorylase">
    <location>
        <begin position="1"/>
        <end position="505"/>
    </location>
</feature>
<keyword id="KW-0328">Glycosyltransferase</keyword>
<keyword id="KW-1185">Reference proteome</keyword>
<keyword id="KW-0808">Transferase</keyword>
<comment type="catalytic activity">
    <reaction evidence="1">
        <text>thymidine + phosphate = 2-deoxy-alpha-D-ribose 1-phosphate + thymine</text>
        <dbReference type="Rhea" id="RHEA:16037"/>
        <dbReference type="ChEBI" id="CHEBI:17748"/>
        <dbReference type="ChEBI" id="CHEBI:17821"/>
        <dbReference type="ChEBI" id="CHEBI:43474"/>
        <dbReference type="ChEBI" id="CHEBI:57259"/>
        <dbReference type="EC" id="2.4.2.4"/>
    </reaction>
</comment>
<comment type="similarity">
    <text evidence="1">Belongs to the thymidine/pyrimidine-nucleoside phosphorylase family. Type 2 subfamily.</text>
</comment>
<accession>A7HYS8</accession>